<keyword id="KW-0031">Aminopeptidase</keyword>
<keyword id="KW-0378">Hydrolase</keyword>
<keyword id="KW-0479">Metal-binding</keyword>
<keyword id="KW-0645">Protease</keyword>
<keyword id="KW-1185">Reference proteome</keyword>
<gene>
    <name evidence="1" type="primary">map</name>
    <name type="ordered locus">SERP1426</name>
</gene>
<accession>Q5HN46</accession>
<sequence>MIVKTDEELQALKEIGYICAKVRDTMKEATKPGVTTRELDHIAKDLFEEHGAISAPIHDENFPGQTCISVNEEVAHGIPGKRVIHEGDLVNIDVSALKNGYYADTGISFVVGKSDQPLKQKVCDVATMAFENAMKKVKPGTKLSNIGKAVHATARQNDLTVIKNLTGHGVGQSLHEAPNHVMNYFDPKDKTLLKEGQVIAVEPFISTHATFVTEGKNEWAFETKDKSYVAQIEHTVIVTKDGPLLTTKIDD</sequence>
<evidence type="ECO:0000255" key="1">
    <source>
        <dbReference type="HAMAP-Rule" id="MF_01974"/>
    </source>
</evidence>
<comment type="function">
    <text evidence="1">Removes the N-terminal methionine from nascent proteins. The N-terminal methionine is often cleaved when the second residue in the primary sequence is small and uncharged (Met-Ala-, Cys, Gly, Pro, Ser, Thr, or Val). Requires deformylation of the N(alpha)-formylated initiator methionine before it can be hydrolyzed.</text>
</comment>
<comment type="catalytic activity">
    <reaction evidence="1">
        <text>Release of N-terminal amino acids, preferentially methionine, from peptides and arylamides.</text>
        <dbReference type="EC" id="3.4.11.18"/>
    </reaction>
</comment>
<comment type="cofactor">
    <cofactor evidence="1">
        <name>Co(2+)</name>
        <dbReference type="ChEBI" id="CHEBI:48828"/>
    </cofactor>
    <cofactor evidence="1">
        <name>Zn(2+)</name>
        <dbReference type="ChEBI" id="CHEBI:29105"/>
    </cofactor>
    <cofactor evidence="1">
        <name>Mn(2+)</name>
        <dbReference type="ChEBI" id="CHEBI:29035"/>
    </cofactor>
    <cofactor evidence="1">
        <name>Fe(2+)</name>
        <dbReference type="ChEBI" id="CHEBI:29033"/>
    </cofactor>
    <text evidence="1">Binds 2 divalent metal cations per subunit. Has a high-affinity and a low affinity metal-binding site. The true nature of the physiological cofactor is under debate. The enzyme is active with cobalt, zinc, manganese or divalent iron ions. Most likely, methionine aminopeptidases function as mononuclear Fe(2+)-metalloproteases under physiological conditions, and the catalytically relevant metal-binding site has been assigned to the histidine-containing high-affinity site.</text>
</comment>
<comment type="subunit">
    <text evidence="1">Monomer.</text>
</comment>
<comment type="similarity">
    <text evidence="1">Belongs to the peptidase M24A family. Methionine aminopeptidase type 1 subfamily.</text>
</comment>
<name>MAP1_STAEQ</name>
<proteinExistence type="inferred from homology"/>
<reference key="1">
    <citation type="journal article" date="2005" name="J. Bacteriol.">
        <title>Insights on evolution of virulence and resistance from the complete genome analysis of an early methicillin-resistant Staphylococcus aureus strain and a biofilm-producing methicillin-resistant Staphylococcus epidermidis strain.</title>
        <authorList>
            <person name="Gill S.R."/>
            <person name="Fouts D.E."/>
            <person name="Archer G.L."/>
            <person name="Mongodin E.F."/>
            <person name="DeBoy R.T."/>
            <person name="Ravel J."/>
            <person name="Paulsen I.T."/>
            <person name="Kolonay J.F."/>
            <person name="Brinkac L.M."/>
            <person name="Beanan M.J."/>
            <person name="Dodson R.J."/>
            <person name="Daugherty S.C."/>
            <person name="Madupu R."/>
            <person name="Angiuoli S.V."/>
            <person name="Durkin A.S."/>
            <person name="Haft D.H."/>
            <person name="Vamathevan J.J."/>
            <person name="Khouri H."/>
            <person name="Utterback T.R."/>
            <person name="Lee C."/>
            <person name="Dimitrov G."/>
            <person name="Jiang L."/>
            <person name="Qin H."/>
            <person name="Weidman J."/>
            <person name="Tran K."/>
            <person name="Kang K.H."/>
            <person name="Hance I.R."/>
            <person name="Nelson K.E."/>
            <person name="Fraser C.M."/>
        </authorList>
    </citation>
    <scope>NUCLEOTIDE SEQUENCE [LARGE SCALE GENOMIC DNA]</scope>
    <source>
        <strain>ATCC 35984 / DSM 28319 / BCRC 17069 / CCUG 31568 / BM 3577 / RP62A</strain>
    </source>
</reference>
<feature type="chain" id="PRO_0000148962" description="Methionine aminopeptidase">
    <location>
        <begin position="1"/>
        <end position="251"/>
    </location>
</feature>
<feature type="binding site" evidence="1">
    <location>
        <position position="76"/>
    </location>
    <ligand>
        <name>substrate</name>
    </ligand>
</feature>
<feature type="binding site" evidence="1">
    <location>
        <position position="93"/>
    </location>
    <ligand>
        <name>a divalent metal cation</name>
        <dbReference type="ChEBI" id="CHEBI:60240"/>
        <label>1</label>
    </ligand>
</feature>
<feature type="binding site" evidence="1">
    <location>
        <position position="104"/>
    </location>
    <ligand>
        <name>a divalent metal cation</name>
        <dbReference type="ChEBI" id="CHEBI:60240"/>
        <label>1</label>
    </ligand>
</feature>
<feature type="binding site" evidence="1">
    <location>
        <position position="104"/>
    </location>
    <ligand>
        <name>a divalent metal cation</name>
        <dbReference type="ChEBI" id="CHEBI:60240"/>
        <label>2</label>
        <note>catalytic</note>
    </ligand>
</feature>
<feature type="binding site" evidence="1">
    <location>
        <position position="168"/>
    </location>
    <ligand>
        <name>a divalent metal cation</name>
        <dbReference type="ChEBI" id="CHEBI:60240"/>
        <label>2</label>
        <note>catalytic</note>
    </ligand>
</feature>
<feature type="binding site" evidence="1">
    <location>
        <position position="175"/>
    </location>
    <ligand>
        <name>substrate</name>
    </ligand>
</feature>
<feature type="binding site" evidence="1">
    <location>
        <position position="202"/>
    </location>
    <ligand>
        <name>a divalent metal cation</name>
        <dbReference type="ChEBI" id="CHEBI:60240"/>
        <label>2</label>
        <note>catalytic</note>
    </ligand>
</feature>
<feature type="binding site" evidence="1">
    <location>
        <position position="233"/>
    </location>
    <ligand>
        <name>a divalent metal cation</name>
        <dbReference type="ChEBI" id="CHEBI:60240"/>
        <label>1</label>
    </ligand>
</feature>
<feature type="binding site" evidence="1">
    <location>
        <position position="233"/>
    </location>
    <ligand>
        <name>a divalent metal cation</name>
        <dbReference type="ChEBI" id="CHEBI:60240"/>
        <label>2</label>
        <note>catalytic</note>
    </ligand>
</feature>
<dbReference type="EC" id="3.4.11.18" evidence="1"/>
<dbReference type="EMBL" id="CP000029">
    <property type="protein sequence ID" value="AAW54790.1"/>
    <property type="molecule type" value="Genomic_DNA"/>
</dbReference>
<dbReference type="RefSeq" id="WP_001830397.1">
    <property type="nucleotide sequence ID" value="NC_002976.3"/>
</dbReference>
<dbReference type="SMR" id="Q5HN46"/>
<dbReference type="STRING" id="176279.SERP1426"/>
<dbReference type="MEROPS" id="M24.036"/>
<dbReference type="KEGG" id="ser:SERP1426"/>
<dbReference type="eggNOG" id="COG0024">
    <property type="taxonomic scope" value="Bacteria"/>
</dbReference>
<dbReference type="HOGENOM" id="CLU_015857_0_2_9"/>
<dbReference type="Proteomes" id="UP000000531">
    <property type="component" value="Chromosome"/>
</dbReference>
<dbReference type="GO" id="GO:0004239">
    <property type="term" value="F:initiator methionyl aminopeptidase activity"/>
    <property type="evidence" value="ECO:0007669"/>
    <property type="project" value="UniProtKB-UniRule"/>
</dbReference>
<dbReference type="GO" id="GO:0046872">
    <property type="term" value="F:metal ion binding"/>
    <property type="evidence" value="ECO:0007669"/>
    <property type="project" value="UniProtKB-UniRule"/>
</dbReference>
<dbReference type="GO" id="GO:0070006">
    <property type="term" value="F:metalloaminopeptidase activity"/>
    <property type="evidence" value="ECO:0007669"/>
    <property type="project" value="UniProtKB-UniRule"/>
</dbReference>
<dbReference type="GO" id="GO:0006508">
    <property type="term" value="P:proteolysis"/>
    <property type="evidence" value="ECO:0007669"/>
    <property type="project" value="UniProtKB-KW"/>
</dbReference>
<dbReference type="CDD" id="cd01086">
    <property type="entry name" value="MetAP1"/>
    <property type="match status" value="1"/>
</dbReference>
<dbReference type="Gene3D" id="3.90.230.10">
    <property type="entry name" value="Creatinase/methionine aminopeptidase superfamily"/>
    <property type="match status" value="1"/>
</dbReference>
<dbReference type="HAMAP" id="MF_01974">
    <property type="entry name" value="MetAP_1"/>
    <property type="match status" value="1"/>
</dbReference>
<dbReference type="InterPro" id="IPR036005">
    <property type="entry name" value="Creatinase/aminopeptidase-like"/>
</dbReference>
<dbReference type="InterPro" id="IPR000994">
    <property type="entry name" value="Pept_M24"/>
</dbReference>
<dbReference type="InterPro" id="IPR001714">
    <property type="entry name" value="Pept_M24_MAP"/>
</dbReference>
<dbReference type="InterPro" id="IPR002467">
    <property type="entry name" value="Pept_M24A_MAP1"/>
</dbReference>
<dbReference type="NCBIfam" id="TIGR00500">
    <property type="entry name" value="met_pdase_I"/>
    <property type="match status" value="1"/>
</dbReference>
<dbReference type="PANTHER" id="PTHR43330">
    <property type="entry name" value="METHIONINE AMINOPEPTIDASE"/>
    <property type="match status" value="1"/>
</dbReference>
<dbReference type="PANTHER" id="PTHR43330:SF13">
    <property type="entry name" value="METHIONINE AMINOPEPTIDASE 2"/>
    <property type="match status" value="1"/>
</dbReference>
<dbReference type="Pfam" id="PF00557">
    <property type="entry name" value="Peptidase_M24"/>
    <property type="match status" value="1"/>
</dbReference>
<dbReference type="PRINTS" id="PR00599">
    <property type="entry name" value="MAPEPTIDASE"/>
</dbReference>
<dbReference type="SUPFAM" id="SSF55920">
    <property type="entry name" value="Creatinase/aminopeptidase"/>
    <property type="match status" value="1"/>
</dbReference>
<protein>
    <recommendedName>
        <fullName evidence="1">Methionine aminopeptidase</fullName>
        <shortName evidence="1">MAP</shortName>
        <shortName evidence="1">MetAP</shortName>
        <ecNumber evidence="1">3.4.11.18</ecNumber>
    </recommendedName>
    <alternativeName>
        <fullName evidence="1">Peptidase M</fullName>
    </alternativeName>
</protein>
<organism>
    <name type="scientific">Staphylococcus epidermidis (strain ATCC 35984 / DSM 28319 / BCRC 17069 / CCUG 31568 / BM 3577 / RP62A)</name>
    <dbReference type="NCBI Taxonomy" id="176279"/>
    <lineage>
        <taxon>Bacteria</taxon>
        <taxon>Bacillati</taxon>
        <taxon>Bacillota</taxon>
        <taxon>Bacilli</taxon>
        <taxon>Bacillales</taxon>
        <taxon>Staphylococcaceae</taxon>
        <taxon>Staphylococcus</taxon>
    </lineage>
</organism>